<name>HGD_RHOPB</name>
<gene>
    <name evidence="1" type="primary">hmgA</name>
    <name type="ordered locus">RPC_0891</name>
</gene>
<protein>
    <recommendedName>
        <fullName evidence="1">Homogentisate 1,2-dioxygenase</fullName>
        <shortName evidence="1">HGDO</shortName>
        <ecNumber evidence="1">1.13.11.5</ecNumber>
    </recommendedName>
    <alternativeName>
        <fullName evidence="1">Homogentisate oxygenase</fullName>
    </alternativeName>
    <alternativeName>
        <fullName evidence="1">Homogentisic acid oxidase</fullName>
    </alternativeName>
    <alternativeName>
        <fullName evidence="1">Homogentisicase</fullName>
    </alternativeName>
</protein>
<comment type="function">
    <text evidence="1">Involved in the catabolism of homogentisate (2,5-dihydroxyphenylacetate or 2,5-OH-PhAc), a central intermediate in the degradation of phenylalanine and tyrosine. Catalyzes the oxidative ring cleavage of the aromatic ring of homogentisate to yield maleylacetoacetate.</text>
</comment>
<comment type="catalytic activity">
    <reaction evidence="1">
        <text>homogentisate + O2 = 4-maleylacetoacetate + H(+)</text>
        <dbReference type="Rhea" id="RHEA:15449"/>
        <dbReference type="ChEBI" id="CHEBI:15378"/>
        <dbReference type="ChEBI" id="CHEBI:15379"/>
        <dbReference type="ChEBI" id="CHEBI:16169"/>
        <dbReference type="ChEBI" id="CHEBI:17105"/>
        <dbReference type="EC" id="1.13.11.5"/>
    </reaction>
</comment>
<comment type="cofactor">
    <cofactor evidence="1">
        <name>Fe cation</name>
        <dbReference type="ChEBI" id="CHEBI:24875"/>
    </cofactor>
</comment>
<comment type="pathway">
    <text evidence="1">Amino-acid degradation; L-phenylalanine degradation; acetoacetate and fumarate from L-phenylalanine: step 4/6.</text>
</comment>
<comment type="subunit">
    <text evidence="1">Hexamer; dimer of trimers.</text>
</comment>
<comment type="similarity">
    <text evidence="1">Belongs to the homogentisate dioxygenase family.</text>
</comment>
<keyword id="KW-0223">Dioxygenase</keyword>
<keyword id="KW-0408">Iron</keyword>
<keyword id="KW-0479">Metal-binding</keyword>
<keyword id="KW-0560">Oxidoreductase</keyword>
<keyword id="KW-0585">Phenylalanine catabolism</keyword>
<keyword id="KW-0828">Tyrosine catabolism</keyword>
<dbReference type="EC" id="1.13.11.5" evidence="1"/>
<dbReference type="EMBL" id="CP000301">
    <property type="protein sequence ID" value="ABD86461.1"/>
    <property type="molecule type" value="Genomic_DNA"/>
</dbReference>
<dbReference type="SMR" id="Q21AX5"/>
<dbReference type="STRING" id="316056.RPC_0891"/>
<dbReference type="KEGG" id="rpc:RPC_0891"/>
<dbReference type="eggNOG" id="COG3508">
    <property type="taxonomic scope" value="Bacteria"/>
</dbReference>
<dbReference type="HOGENOM" id="CLU_027174_0_0_5"/>
<dbReference type="OrthoDB" id="9811253at2"/>
<dbReference type="UniPathway" id="UPA00139">
    <property type="reaction ID" value="UER00339"/>
</dbReference>
<dbReference type="GO" id="GO:0005737">
    <property type="term" value="C:cytoplasm"/>
    <property type="evidence" value="ECO:0007669"/>
    <property type="project" value="TreeGrafter"/>
</dbReference>
<dbReference type="GO" id="GO:0004411">
    <property type="term" value="F:homogentisate 1,2-dioxygenase activity"/>
    <property type="evidence" value="ECO:0007669"/>
    <property type="project" value="UniProtKB-UniRule"/>
</dbReference>
<dbReference type="GO" id="GO:0005506">
    <property type="term" value="F:iron ion binding"/>
    <property type="evidence" value="ECO:0007669"/>
    <property type="project" value="UniProtKB-UniRule"/>
</dbReference>
<dbReference type="GO" id="GO:0006559">
    <property type="term" value="P:L-phenylalanine catabolic process"/>
    <property type="evidence" value="ECO:0007669"/>
    <property type="project" value="UniProtKB-UniRule"/>
</dbReference>
<dbReference type="GO" id="GO:0006572">
    <property type="term" value="P:tyrosine catabolic process"/>
    <property type="evidence" value="ECO:0007669"/>
    <property type="project" value="UniProtKB-UniRule"/>
</dbReference>
<dbReference type="CDD" id="cd07000">
    <property type="entry name" value="cupin_HGO_N"/>
    <property type="match status" value="1"/>
</dbReference>
<dbReference type="FunFam" id="2.60.120.10:FF:000053">
    <property type="entry name" value="Homogentisate 1,2-dioxygenase"/>
    <property type="match status" value="1"/>
</dbReference>
<dbReference type="Gene3D" id="2.60.120.10">
    <property type="entry name" value="Jelly Rolls"/>
    <property type="match status" value="1"/>
</dbReference>
<dbReference type="HAMAP" id="MF_00334">
    <property type="entry name" value="Homogentis_dioxygen"/>
    <property type="match status" value="1"/>
</dbReference>
<dbReference type="InterPro" id="IPR046451">
    <property type="entry name" value="HgmA_C"/>
</dbReference>
<dbReference type="InterPro" id="IPR046452">
    <property type="entry name" value="HgmA_N"/>
</dbReference>
<dbReference type="InterPro" id="IPR005708">
    <property type="entry name" value="Homogentis_dOase"/>
</dbReference>
<dbReference type="InterPro" id="IPR022950">
    <property type="entry name" value="Homogentis_dOase_bac"/>
</dbReference>
<dbReference type="InterPro" id="IPR014710">
    <property type="entry name" value="RmlC-like_jellyroll"/>
</dbReference>
<dbReference type="InterPro" id="IPR011051">
    <property type="entry name" value="RmlC_Cupin_sf"/>
</dbReference>
<dbReference type="NCBIfam" id="TIGR01015">
    <property type="entry name" value="hmgA"/>
    <property type="match status" value="1"/>
</dbReference>
<dbReference type="PANTHER" id="PTHR11056">
    <property type="entry name" value="HOMOGENTISATE 1,2-DIOXYGENASE"/>
    <property type="match status" value="1"/>
</dbReference>
<dbReference type="PANTHER" id="PTHR11056:SF0">
    <property type="entry name" value="HOMOGENTISATE 1,2-DIOXYGENASE"/>
    <property type="match status" value="1"/>
</dbReference>
<dbReference type="Pfam" id="PF04209">
    <property type="entry name" value="HgmA_C"/>
    <property type="match status" value="1"/>
</dbReference>
<dbReference type="Pfam" id="PF20510">
    <property type="entry name" value="HgmA_N"/>
    <property type="match status" value="1"/>
</dbReference>
<dbReference type="SUPFAM" id="SSF51182">
    <property type="entry name" value="RmlC-like cupins"/>
    <property type="match status" value="1"/>
</dbReference>
<evidence type="ECO:0000255" key="1">
    <source>
        <dbReference type="HAMAP-Rule" id="MF_00334"/>
    </source>
</evidence>
<sequence length="448" mass="49318">MNITTAPGLIGRSTQAITPGYMSGFGNSFETEALPGALPIGRNSPQRAPYGLYAEQLSGSPFTAPRGSNERSWLYRIRPSVQHSGRFEKAEAGLWRSAPCHEHDMPIAQLRWDPPPLPQRAQTFLQGVETMTTAGDVNTQAGMAAHMYLISASMVNQHFYNADGELMFVPQQGGLRLVTEFGVIGVAPGEIAVIPRGVKFRVELIDGPARGYLCENYGGGFTLPERGPIGANCLANARDFLTPVAAYEDSDTPTELYVKWGGALWVTQLPHSPIDVVAWHGNYAPYKYDLRTFSPVGAIGFDHPDPSIFTVLTSPSETAGTANIDFVIFPERWMVAENTFRPPWYHMNIMSEFMGLIYGVYDAKPQGFLPGGASLHNMMLPHGPDREAFDHASNAELKPVKLEGTLAFMFETRYPQRVTVHAATSSTLQADYAECWRGLQKRFDPTKP</sequence>
<feature type="chain" id="PRO_1000019542" description="Homogentisate 1,2-dioxygenase">
    <location>
        <begin position="1"/>
        <end position="448"/>
    </location>
</feature>
<feature type="active site" description="Proton acceptor" evidence="1">
    <location>
        <position position="303"/>
    </location>
</feature>
<feature type="binding site" evidence="1">
    <location>
        <position position="346"/>
    </location>
    <ligand>
        <name>Fe cation</name>
        <dbReference type="ChEBI" id="CHEBI:24875"/>
    </ligand>
</feature>
<feature type="binding site" evidence="1">
    <location>
        <position position="352"/>
    </location>
    <ligand>
        <name>Fe cation</name>
        <dbReference type="ChEBI" id="CHEBI:24875"/>
    </ligand>
</feature>
<feature type="binding site" evidence="1">
    <location>
        <position position="361"/>
    </location>
    <ligand>
        <name>homogentisate</name>
        <dbReference type="ChEBI" id="CHEBI:16169"/>
    </ligand>
</feature>
<feature type="binding site" evidence="1">
    <location>
        <position position="382"/>
    </location>
    <ligand>
        <name>Fe cation</name>
        <dbReference type="ChEBI" id="CHEBI:24875"/>
    </ligand>
</feature>
<feature type="binding site" evidence="1">
    <location>
        <position position="382"/>
    </location>
    <ligand>
        <name>homogentisate</name>
        <dbReference type="ChEBI" id="CHEBI:16169"/>
    </ligand>
</feature>
<accession>Q21AX5</accession>
<proteinExistence type="inferred from homology"/>
<reference key="1">
    <citation type="submission" date="2006-03" db="EMBL/GenBank/DDBJ databases">
        <title>Complete sequence of Rhodopseudomonas palustris BisB18.</title>
        <authorList>
            <consortium name="US DOE Joint Genome Institute"/>
            <person name="Copeland A."/>
            <person name="Lucas S."/>
            <person name="Lapidus A."/>
            <person name="Barry K."/>
            <person name="Detter J.C."/>
            <person name="Glavina del Rio T."/>
            <person name="Hammon N."/>
            <person name="Israni S."/>
            <person name="Dalin E."/>
            <person name="Tice H."/>
            <person name="Pitluck S."/>
            <person name="Chain P."/>
            <person name="Malfatti S."/>
            <person name="Shin M."/>
            <person name="Vergez L."/>
            <person name="Schmutz J."/>
            <person name="Larimer F."/>
            <person name="Land M."/>
            <person name="Hauser L."/>
            <person name="Pelletier D.A."/>
            <person name="Kyrpides N."/>
            <person name="Anderson I."/>
            <person name="Oda Y."/>
            <person name="Harwood C.S."/>
            <person name="Richardson P."/>
        </authorList>
    </citation>
    <scope>NUCLEOTIDE SEQUENCE [LARGE SCALE GENOMIC DNA]</scope>
    <source>
        <strain>BisB18</strain>
    </source>
</reference>
<organism>
    <name type="scientific">Rhodopseudomonas palustris (strain BisB18)</name>
    <dbReference type="NCBI Taxonomy" id="316056"/>
    <lineage>
        <taxon>Bacteria</taxon>
        <taxon>Pseudomonadati</taxon>
        <taxon>Pseudomonadota</taxon>
        <taxon>Alphaproteobacteria</taxon>
        <taxon>Hyphomicrobiales</taxon>
        <taxon>Nitrobacteraceae</taxon>
        <taxon>Rhodopseudomonas</taxon>
    </lineage>
</organism>